<sequence length="122" mass="13456">MIQMQSTLDVACNSGARRVQCIKVLGGSHRRYAGIGDIIKVSVKEAIPRAKAKKGDVYNAVVVRTKKGVRRPDGSVIRFDRNAAVLLNNNLQPIGTRIFGPVTRELRNEQFMKIVSLAPEVL</sequence>
<dbReference type="EMBL" id="CP000891">
    <property type="protein sequence ID" value="ABX47392.1"/>
    <property type="molecule type" value="Genomic_DNA"/>
</dbReference>
<dbReference type="RefSeq" id="WP_006083590.1">
    <property type="nucleotide sequence ID" value="NC_009997.1"/>
</dbReference>
<dbReference type="SMR" id="A9KWB2"/>
<dbReference type="GeneID" id="75190608"/>
<dbReference type="KEGG" id="sbn:Sbal195_0210"/>
<dbReference type="HOGENOM" id="CLU_095071_2_1_6"/>
<dbReference type="Proteomes" id="UP000000770">
    <property type="component" value="Chromosome"/>
</dbReference>
<dbReference type="GO" id="GO:0022625">
    <property type="term" value="C:cytosolic large ribosomal subunit"/>
    <property type="evidence" value="ECO:0007669"/>
    <property type="project" value="TreeGrafter"/>
</dbReference>
<dbReference type="GO" id="GO:0070180">
    <property type="term" value="F:large ribosomal subunit rRNA binding"/>
    <property type="evidence" value="ECO:0007669"/>
    <property type="project" value="TreeGrafter"/>
</dbReference>
<dbReference type="GO" id="GO:0003735">
    <property type="term" value="F:structural constituent of ribosome"/>
    <property type="evidence" value="ECO:0007669"/>
    <property type="project" value="InterPro"/>
</dbReference>
<dbReference type="GO" id="GO:0006412">
    <property type="term" value="P:translation"/>
    <property type="evidence" value="ECO:0007669"/>
    <property type="project" value="UniProtKB-UniRule"/>
</dbReference>
<dbReference type="CDD" id="cd00337">
    <property type="entry name" value="Ribosomal_uL14"/>
    <property type="match status" value="1"/>
</dbReference>
<dbReference type="FunFam" id="2.40.150.20:FF:000001">
    <property type="entry name" value="50S ribosomal protein L14"/>
    <property type="match status" value="1"/>
</dbReference>
<dbReference type="Gene3D" id="2.40.150.20">
    <property type="entry name" value="Ribosomal protein L14"/>
    <property type="match status" value="1"/>
</dbReference>
<dbReference type="HAMAP" id="MF_01367">
    <property type="entry name" value="Ribosomal_uL14"/>
    <property type="match status" value="1"/>
</dbReference>
<dbReference type="InterPro" id="IPR000218">
    <property type="entry name" value="Ribosomal_uL14"/>
</dbReference>
<dbReference type="InterPro" id="IPR005745">
    <property type="entry name" value="Ribosomal_uL14_bac-type"/>
</dbReference>
<dbReference type="InterPro" id="IPR019972">
    <property type="entry name" value="Ribosomal_uL14_CS"/>
</dbReference>
<dbReference type="InterPro" id="IPR036853">
    <property type="entry name" value="Ribosomal_uL14_sf"/>
</dbReference>
<dbReference type="NCBIfam" id="TIGR01067">
    <property type="entry name" value="rplN_bact"/>
    <property type="match status" value="1"/>
</dbReference>
<dbReference type="PANTHER" id="PTHR11761">
    <property type="entry name" value="50S/60S RIBOSOMAL PROTEIN L14/L23"/>
    <property type="match status" value="1"/>
</dbReference>
<dbReference type="PANTHER" id="PTHR11761:SF3">
    <property type="entry name" value="LARGE RIBOSOMAL SUBUNIT PROTEIN UL14M"/>
    <property type="match status" value="1"/>
</dbReference>
<dbReference type="Pfam" id="PF00238">
    <property type="entry name" value="Ribosomal_L14"/>
    <property type="match status" value="1"/>
</dbReference>
<dbReference type="SMART" id="SM01374">
    <property type="entry name" value="Ribosomal_L14"/>
    <property type="match status" value="1"/>
</dbReference>
<dbReference type="SUPFAM" id="SSF50193">
    <property type="entry name" value="Ribosomal protein L14"/>
    <property type="match status" value="1"/>
</dbReference>
<dbReference type="PROSITE" id="PS00049">
    <property type="entry name" value="RIBOSOMAL_L14"/>
    <property type="match status" value="1"/>
</dbReference>
<feature type="chain" id="PRO_1000087146" description="Large ribosomal subunit protein uL14">
    <location>
        <begin position="1"/>
        <end position="122"/>
    </location>
</feature>
<gene>
    <name evidence="1" type="primary">rplN</name>
    <name type="ordered locus">Sbal195_0210</name>
</gene>
<reference key="1">
    <citation type="submission" date="2007-11" db="EMBL/GenBank/DDBJ databases">
        <title>Complete sequence of chromosome of Shewanella baltica OS195.</title>
        <authorList>
            <consortium name="US DOE Joint Genome Institute"/>
            <person name="Copeland A."/>
            <person name="Lucas S."/>
            <person name="Lapidus A."/>
            <person name="Barry K."/>
            <person name="Glavina del Rio T."/>
            <person name="Dalin E."/>
            <person name="Tice H."/>
            <person name="Pitluck S."/>
            <person name="Chain P."/>
            <person name="Malfatti S."/>
            <person name="Shin M."/>
            <person name="Vergez L."/>
            <person name="Schmutz J."/>
            <person name="Larimer F."/>
            <person name="Land M."/>
            <person name="Hauser L."/>
            <person name="Kyrpides N."/>
            <person name="Kim E."/>
            <person name="Brettar I."/>
            <person name="Rodrigues J."/>
            <person name="Konstantinidis K."/>
            <person name="Klappenbach J."/>
            <person name="Hofle M."/>
            <person name="Tiedje J."/>
            <person name="Richardson P."/>
        </authorList>
    </citation>
    <scope>NUCLEOTIDE SEQUENCE [LARGE SCALE GENOMIC DNA]</scope>
    <source>
        <strain>OS195</strain>
    </source>
</reference>
<evidence type="ECO:0000255" key="1">
    <source>
        <dbReference type="HAMAP-Rule" id="MF_01367"/>
    </source>
</evidence>
<evidence type="ECO:0000305" key="2"/>
<protein>
    <recommendedName>
        <fullName evidence="1">Large ribosomal subunit protein uL14</fullName>
    </recommendedName>
    <alternativeName>
        <fullName evidence="2">50S ribosomal protein L14</fullName>
    </alternativeName>
</protein>
<organism>
    <name type="scientific">Shewanella baltica (strain OS195)</name>
    <dbReference type="NCBI Taxonomy" id="399599"/>
    <lineage>
        <taxon>Bacteria</taxon>
        <taxon>Pseudomonadati</taxon>
        <taxon>Pseudomonadota</taxon>
        <taxon>Gammaproteobacteria</taxon>
        <taxon>Alteromonadales</taxon>
        <taxon>Shewanellaceae</taxon>
        <taxon>Shewanella</taxon>
    </lineage>
</organism>
<comment type="function">
    <text evidence="1">Binds to 23S rRNA. Forms part of two intersubunit bridges in the 70S ribosome.</text>
</comment>
<comment type="subunit">
    <text evidence="1">Part of the 50S ribosomal subunit. Forms a cluster with proteins L3 and L19. In the 70S ribosome, L14 and L19 interact and together make contacts with the 16S rRNA in bridges B5 and B8.</text>
</comment>
<comment type="similarity">
    <text evidence="1">Belongs to the universal ribosomal protein uL14 family.</text>
</comment>
<proteinExistence type="inferred from homology"/>
<keyword id="KW-0687">Ribonucleoprotein</keyword>
<keyword id="KW-0689">Ribosomal protein</keyword>
<keyword id="KW-0694">RNA-binding</keyword>
<keyword id="KW-0699">rRNA-binding</keyword>
<accession>A9KWB2</accession>
<name>RL14_SHEB9</name>